<evidence type="ECO:0000255" key="1">
    <source>
        <dbReference type="HAMAP-Rule" id="MF_00657"/>
    </source>
</evidence>
<name>Y4714_BURA4</name>
<comment type="cofactor">
    <cofactor evidence="1">
        <name>Fe(2+)</name>
        <dbReference type="ChEBI" id="CHEBI:29033"/>
    </cofactor>
    <text evidence="1">Binds 1 Fe(2+) ion per subunit.</text>
</comment>
<comment type="cofactor">
    <cofactor evidence="1">
        <name>L-ascorbate</name>
        <dbReference type="ChEBI" id="CHEBI:38290"/>
    </cofactor>
</comment>
<gene>
    <name type="ordered locus">BamMC406_4714</name>
</gene>
<reference key="1">
    <citation type="submission" date="2008-04" db="EMBL/GenBank/DDBJ databases">
        <title>Complete sequence of chromosome 2 of Burkholderia ambifaria MC40-6.</title>
        <authorList>
            <person name="Copeland A."/>
            <person name="Lucas S."/>
            <person name="Lapidus A."/>
            <person name="Glavina del Rio T."/>
            <person name="Dalin E."/>
            <person name="Tice H."/>
            <person name="Pitluck S."/>
            <person name="Chain P."/>
            <person name="Malfatti S."/>
            <person name="Shin M."/>
            <person name="Vergez L."/>
            <person name="Lang D."/>
            <person name="Schmutz J."/>
            <person name="Larimer F."/>
            <person name="Land M."/>
            <person name="Hauser L."/>
            <person name="Kyrpides N."/>
            <person name="Lykidis A."/>
            <person name="Ramette A."/>
            <person name="Konstantinidis K."/>
            <person name="Tiedje J."/>
            <person name="Richardson P."/>
        </authorList>
    </citation>
    <scope>NUCLEOTIDE SEQUENCE [LARGE SCALE GENOMIC DNA]</scope>
    <source>
        <strain>MC40-6</strain>
    </source>
</reference>
<feature type="chain" id="PRO_0000346469" description="PKHD-type hydroxylase BamMC406_4714">
    <location>
        <begin position="1"/>
        <end position="227"/>
    </location>
</feature>
<feature type="domain" description="Fe2OG dioxygenase" evidence="1">
    <location>
        <begin position="78"/>
        <end position="178"/>
    </location>
</feature>
<feature type="binding site" evidence="1">
    <location>
        <position position="96"/>
    </location>
    <ligand>
        <name>Fe cation</name>
        <dbReference type="ChEBI" id="CHEBI:24875"/>
    </ligand>
</feature>
<feature type="binding site" evidence="1">
    <location>
        <position position="98"/>
    </location>
    <ligand>
        <name>Fe cation</name>
        <dbReference type="ChEBI" id="CHEBI:24875"/>
    </ligand>
</feature>
<feature type="binding site" evidence="1">
    <location>
        <position position="159"/>
    </location>
    <ligand>
        <name>Fe cation</name>
        <dbReference type="ChEBI" id="CHEBI:24875"/>
    </ligand>
</feature>
<feature type="binding site" evidence="1">
    <location>
        <position position="169"/>
    </location>
    <ligand>
        <name>2-oxoglutarate</name>
        <dbReference type="ChEBI" id="CHEBI:16810"/>
    </ligand>
</feature>
<proteinExistence type="inferred from homology"/>
<dbReference type="EC" id="1.14.11.-" evidence="1"/>
<dbReference type="EMBL" id="CP001026">
    <property type="protein sequence ID" value="ACB67168.1"/>
    <property type="molecule type" value="Genomic_DNA"/>
</dbReference>
<dbReference type="RefSeq" id="WP_012366461.1">
    <property type="nucleotide sequence ID" value="NC_010552.1"/>
</dbReference>
<dbReference type="SMR" id="B1YY34"/>
<dbReference type="KEGG" id="bac:BamMC406_4714"/>
<dbReference type="HOGENOM" id="CLU_106663_0_0_4"/>
<dbReference type="OrthoDB" id="9812472at2"/>
<dbReference type="Proteomes" id="UP000001680">
    <property type="component" value="Chromosome 2"/>
</dbReference>
<dbReference type="GO" id="GO:0016706">
    <property type="term" value="F:2-oxoglutarate-dependent dioxygenase activity"/>
    <property type="evidence" value="ECO:0007669"/>
    <property type="project" value="UniProtKB-UniRule"/>
</dbReference>
<dbReference type="GO" id="GO:0005506">
    <property type="term" value="F:iron ion binding"/>
    <property type="evidence" value="ECO:0007669"/>
    <property type="project" value="UniProtKB-UniRule"/>
</dbReference>
<dbReference type="GO" id="GO:0031418">
    <property type="term" value="F:L-ascorbic acid binding"/>
    <property type="evidence" value="ECO:0007669"/>
    <property type="project" value="UniProtKB-KW"/>
</dbReference>
<dbReference type="GO" id="GO:0006974">
    <property type="term" value="P:DNA damage response"/>
    <property type="evidence" value="ECO:0007669"/>
    <property type="project" value="TreeGrafter"/>
</dbReference>
<dbReference type="GO" id="GO:0006879">
    <property type="term" value="P:intracellular iron ion homeostasis"/>
    <property type="evidence" value="ECO:0007669"/>
    <property type="project" value="TreeGrafter"/>
</dbReference>
<dbReference type="Gene3D" id="2.60.120.620">
    <property type="entry name" value="q2cbj1_9rhob like domain"/>
    <property type="match status" value="1"/>
</dbReference>
<dbReference type="Gene3D" id="4.10.860.20">
    <property type="entry name" value="Rabenosyn, Rab binding domain"/>
    <property type="match status" value="1"/>
</dbReference>
<dbReference type="HAMAP" id="MF_00657">
    <property type="entry name" value="Hydroxyl_YbiX"/>
    <property type="match status" value="1"/>
</dbReference>
<dbReference type="InterPro" id="IPR005123">
    <property type="entry name" value="Oxoglu/Fe-dep_dioxygenase_dom"/>
</dbReference>
<dbReference type="InterPro" id="IPR041097">
    <property type="entry name" value="PKHD_C"/>
</dbReference>
<dbReference type="InterPro" id="IPR023550">
    <property type="entry name" value="PKHD_hydroxylase"/>
</dbReference>
<dbReference type="InterPro" id="IPR006620">
    <property type="entry name" value="Pro_4_hyd_alph"/>
</dbReference>
<dbReference type="InterPro" id="IPR044862">
    <property type="entry name" value="Pro_4_hyd_alph_FE2OG_OXY"/>
</dbReference>
<dbReference type="NCBIfam" id="NF003973">
    <property type="entry name" value="PRK05467.1-2"/>
    <property type="match status" value="1"/>
</dbReference>
<dbReference type="NCBIfam" id="NF003974">
    <property type="entry name" value="PRK05467.1-3"/>
    <property type="match status" value="1"/>
</dbReference>
<dbReference type="NCBIfam" id="NF003975">
    <property type="entry name" value="PRK05467.1-4"/>
    <property type="match status" value="1"/>
</dbReference>
<dbReference type="PANTHER" id="PTHR41536">
    <property type="entry name" value="PKHD-TYPE HYDROXYLASE YBIX"/>
    <property type="match status" value="1"/>
</dbReference>
<dbReference type="PANTHER" id="PTHR41536:SF1">
    <property type="entry name" value="PKHD-TYPE HYDROXYLASE YBIX"/>
    <property type="match status" value="1"/>
</dbReference>
<dbReference type="Pfam" id="PF13640">
    <property type="entry name" value="2OG-FeII_Oxy_3"/>
    <property type="match status" value="1"/>
</dbReference>
<dbReference type="Pfam" id="PF18331">
    <property type="entry name" value="PKHD_C"/>
    <property type="match status" value="1"/>
</dbReference>
<dbReference type="SMART" id="SM00702">
    <property type="entry name" value="P4Hc"/>
    <property type="match status" value="1"/>
</dbReference>
<dbReference type="PROSITE" id="PS51471">
    <property type="entry name" value="FE2OG_OXY"/>
    <property type="match status" value="1"/>
</dbReference>
<accession>B1YY34</accession>
<protein>
    <recommendedName>
        <fullName evidence="1">PKHD-type hydroxylase BamMC406_4714</fullName>
        <ecNumber evidence="1">1.14.11.-</ecNumber>
    </recommendedName>
</protein>
<organism>
    <name type="scientific">Burkholderia ambifaria (strain MC40-6)</name>
    <dbReference type="NCBI Taxonomy" id="398577"/>
    <lineage>
        <taxon>Bacteria</taxon>
        <taxon>Pseudomonadati</taxon>
        <taxon>Pseudomonadota</taxon>
        <taxon>Betaproteobacteria</taxon>
        <taxon>Burkholderiales</taxon>
        <taxon>Burkholderiaceae</taxon>
        <taxon>Burkholderia</taxon>
        <taxon>Burkholderia cepacia complex</taxon>
    </lineage>
</organism>
<keyword id="KW-0223">Dioxygenase</keyword>
<keyword id="KW-0408">Iron</keyword>
<keyword id="KW-0479">Metal-binding</keyword>
<keyword id="KW-0560">Oxidoreductase</keyword>
<keyword id="KW-0847">Vitamin C</keyword>
<sequence length="227" mass="24741">MMLHIPGVLTNAQVAQCRELLDAADWVDGNATSGAQSALAKRNRQLPEGSPVARAVGDAIQDALARHALFFSAALPLKVFPPLFNRYAGGETFGTHVDNAIRLLRGTDFRVRSDLSATLFLAEPDAYDGGELCVEDTYGVHRAKLPAGDLVLYPASSLHHVTPVTRGERVASFFWIQSMVRDDGDRTLLFQLDTQIQALSAEKGAKDPMVISLTGIYHNLLRKWADA</sequence>